<keyword id="KW-1003">Cell membrane</keyword>
<keyword id="KW-0472">Membrane</keyword>
<keyword id="KW-1185">Reference proteome</keyword>
<keyword id="KW-0812">Transmembrane</keyword>
<keyword id="KW-1133">Transmembrane helix</keyword>
<name>AAEX_SALTY</name>
<accession>Q7CPM7</accession>
<comment type="subcellular location">
    <subcellularLocation>
        <location evidence="1">Cell membrane</location>
        <topology evidence="1">Multi-pass membrane protein</topology>
    </subcellularLocation>
</comment>
<comment type="similarity">
    <text evidence="1">Belongs to the AaeX family.</text>
</comment>
<feature type="chain" id="PRO_0000215054" description="Protein AaeX">
    <location>
        <begin position="1"/>
        <end position="67"/>
    </location>
</feature>
<feature type="transmembrane region" description="Helical" evidence="1">
    <location>
        <begin position="3"/>
        <end position="23"/>
    </location>
</feature>
<feature type="transmembrane region" description="Helical" evidence="1">
    <location>
        <begin position="43"/>
        <end position="63"/>
    </location>
</feature>
<evidence type="ECO:0000255" key="1">
    <source>
        <dbReference type="HAMAP-Rule" id="MF_01546"/>
    </source>
</evidence>
<gene>
    <name evidence="1" type="primary">aaeX</name>
    <name type="ordered locus">STM3366</name>
</gene>
<proteinExistence type="inferred from homology"/>
<protein>
    <recommendedName>
        <fullName evidence="1">Protein AaeX</fullName>
    </recommendedName>
</protein>
<organism>
    <name type="scientific">Salmonella typhimurium (strain LT2 / SGSC1412 / ATCC 700720)</name>
    <dbReference type="NCBI Taxonomy" id="99287"/>
    <lineage>
        <taxon>Bacteria</taxon>
        <taxon>Pseudomonadati</taxon>
        <taxon>Pseudomonadota</taxon>
        <taxon>Gammaproteobacteria</taxon>
        <taxon>Enterobacterales</taxon>
        <taxon>Enterobacteriaceae</taxon>
        <taxon>Salmonella</taxon>
    </lineage>
</organism>
<reference key="1">
    <citation type="journal article" date="2001" name="Nature">
        <title>Complete genome sequence of Salmonella enterica serovar Typhimurium LT2.</title>
        <authorList>
            <person name="McClelland M."/>
            <person name="Sanderson K.E."/>
            <person name="Spieth J."/>
            <person name="Clifton S.W."/>
            <person name="Latreille P."/>
            <person name="Courtney L."/>
            <person name="Porwollik S."/>
            <person name="Ali J."/>
            <person name="Dante M."/>
            <person name="Du F."/>
            <person name="Hou S."/>
            <person name="Layman D."/>
            <person name="Leonard S."/>
            <person name="Nguyen C."/>
            <person name="Scott K."/>
            <person name="Holmes A."/>
            <person name="Grewal N."/>
            <person name="Mulvaney E."/>
            <person name="Ryan E."/>
            <person name="Sun H."/>
            <person name="Florea L."/>
            <person name="Miller W."/>
            <person name="Stoneking T."/>
            <person name="Nhan M."/>
            <person name="Waterston R."/>
            <person name="Wilson R.K."/>
        </authorList>
    </citation>
    <scope>NUCLEOTIDE SEQUENCE [LARGE SCALE GENOMIC DNA]</scope>
    <source>
        <strain>LT2 / SGSC1412 / ATCC 700720</strain>
    </source>
</reference>
<dbReference type="EMBL" id="AE006468">
    <property type="protein sequence ID" value="AAL22235.1"/>
    <property type="molecule type" value="Genomic_DNA"/>
</dbReference>
<dbReference type="RefSeq" id="WP_000051840.1">
    <property type="nucleotide sequence ID" value="NC_003197.2"/>
</dbReference>
<dbReference type="SMR" id="Q7CPM7"/>
<dbReference type="STRING" id="99287.STM3366"/>
<dbReference type="PaxDb" id="99287-STM3366"/>
<dbReference type="GeneID" id="45138179"/>
<dbReference type="KEGG" id="stm:STM3366"/>
<dbReference type="PATRIC" id="fig|99287.12.peg.3567"/>
<dbReference type="HOGENOM" id="CLU_188292_0_0_6"/>
<dbReference type="OMA" id="IYDLVWH"/>
<dbReference type="PhylomeDB" id="Q7CPM7"/>
<dbReference type="BioCyc" id="SENT99287:STM3366-MONOMER"/>
<dbReference type="Proteomes" id="UP000001014">
    <property type="component" value="Chromosome"/>
</dbReference>
<dbReference type="GO" id="GO:0005886">
    <property type="term" value="C:plasma membrane"/>
    <property type="evidence" value="ECO:0007669"/>
    <property type="project" value="UniProtKB-SubCell"/>
</dbReference>
<dbReference type="HAMAP" id="MF_01546">
    <property type="entry name" value="AaeX"/>
    <property type="match status" value="1"/>
</dbReference>
<dbReference type="InterPro" id="IPR012451">
    <property type="entry name" value="DUF1656"/>
</dbReference>
<dbReference type="NCBIfam" id="NF008615">
    <property type="entry name" value="PRK11594.1"/>
    <property type="match status" value="1"/>
</dbReference>
<dbReference type="Pfam" id="PF07869">
    <property type="entry name" value="DUF1656"/>
    <property type="match status" value="1"/>
</dbReference>
<sequence>MSLFPVIVVFGLSFPPIFFELLLSLAIFWLVRRMLVPTGIYDFVWHPALFNTALYCCLFYLISRLFV</sequence>